<feature type="chain" id="PRO_0000309283" description="Pre-mRNA-processing factor 40 homolog B">
    <location>
        <begin position="1"/>
        <end position="870"/>
    </location>
</feature>
<feature type="domain" description="WW 1" evidence="4">
    <location>
        <begin position="92"/>
        <end position="125"/>
    </location>
</feature>
<feature type="domain" description="WW 2" evidence="4">
    <location>
        <begin position="133"/>
        <end position="166"/>
    </location>
</feature>
<feature type="domain" description="FF 1">
    <location>
        <begin position="276"/>
        <end position="330"/>
    </location>
</feature>
<feature type="domain" description="FF 2">
    <location>
        <begin position="340"/>
        <end position="397"/>
    </location>
</feature>
<feature type="domain" description="FF 3">
    <location>
        <begin position="410"/>
        <end position="470"/>
    </location>
</feature>
<feature type="domain" description="FF 4">
    <location>
        <begin position="490"/>
        <end position="550"/>
    </location>
</feature>
<feature type="domain" description="FF 5">
    <location>
        <begin position="554"/>
        <end position="610"/>
    </location>
</feature>
<feature type="domain" description="FF 6">
    <location>
        <begin position="625"/>
        <end position="682"/>
    </location>
</feature>
<feature type="region of interest" description="Disordered" evidence="5">
    <location>
        <begin position="146"/>
        <end position="277"/>
    </location>
</feature>
<feature type="region of interest" description="Disordered" evidence="5">
    <location>
        <begin position="690"/>
        <end position="870"/>
    </location>
</feature>
<feature type="coiled-coil region" evidence="3">
    <location>
        <begin position="604"/>
        <end position="640"/>
    </location>
</feature>
<feature type="compositionally biased region" description="Low complexity" evidence="5">
    <location>
        <begin position="182"/>
        <end position="191"/>
    </location>
</feature>
<feature type="compositionally biased region" description="Pro residues" evidence="5">
    <location>
        <begin position="192"/>
        <end position="211"/>
    </location>
</feature>
<feature type="compositionally biased region" description="Basic residues" evidence="5">
    <location>
        <begin position="691"/>
        <end position="711"/>
    </location>
</feature>
<feature type="compositionally biased region" description="Low complexity" evidence="5">
    <location>
        <begin position="739"/>
        <end position="756"/>
    </location>
</feature>
<feature type="compositionally biased region" description="Low complexity" evidence="5">
    <location>
        <begin position="764"/>
        <end position="774"/>
    </location>
</feature>
<feature type="compositionally biased region" description="Basic residues" evidence="5">
    <location>
        <begin position="778"/>
        <end position="794"/>
    </location>
</feature>
<feature type="compositionally biased region" description="Basic and acidic residues" evidence="5">
    <location>
        <begin position="804"/>
        <end position="824"/>
    </location>
</feature>
<feature type="modified residue" description="N6-acetyllysine" evidence="2">
    <location>
        <position position="148"/>
    </location>
</feature>
<feature type="modified residue" description="Phosphoserine" evidence="2">
    <location>
        <position position="764"/>
    </location>
</feature>
<feature type="modified residue" description="Phosphoserine" evidence="2">
    <location>
        <position position="831"/>
    </location>
</feature>
<feature type="modified residue" description="Phosphoserine" evidence="10">
    <location>
        <position position="851"/>
    </location>
</feature>
<feature type="cross-link" description="Glycyl lysine isopeptide (Lys-Gly) (interchain with G-Cter in SUMO2)" evidence="2">
    <location>
        <position position="175"/>
    </location>
</feature>
<feature type="cross-link" description="Glycyl lysine isopeptide (Lys-Gly) (interchain with G-Cter in SUMO2)" evidence="2">
    <location>
        <position position="837"/>
    </location>
</feature>
<feature type="splice variant" id="VSP_029122" description="In isoform 2." evidence="6 7">
    <original>STPLDLFKFYVEELKARFHD</original>
    <variation>KAARLPLVCSAFLPCQPLWT</variation>
    <location>
        <begin position="538"/>
        <end position="557"/>
    </location>
</feature>
<feature type="splice variant" id="VSP_029123" description="In isoform 2." evidence="6 7">
    <location>
        <begin position="558"/>
        <end position="870"/>
    </location>
</feature>
<feature type="splice variant" id="VSP_029124" description="In isoform 3." evidence="8">
    <location>
        <position position="685"/>
    </location>
</feature>
<feature type="splice variant" id="VSP_029125" description="In isoform 3." evidence="8">
    <original>S</original>
    <variation>SVSRQ</variation>
    <location>
        <position position="714"/>
    </location>
</feature>
<feature type="sequence conflict" description="In Ref. 1; AAD39464." evidence="9" ref="1">
    <original>T</original>
    <variation>R</variation>
    <location>
        <position position="616"/>
    </location>
</feature>
<gene>
    <name type="primary">Prpf40b</name>
    <name type="synonym">Hypc</name>
</gene>
<protein>
    <recommendedName>
        <fullName>Pre-mRNA-processing factor 40 homolog B</fullName>
    </recommendedName>
    <alternativeName>
        <fullName>Huntingtin yeast partner C</fullName>
    </alternativeName>
    <alternativeName>
        <fullName>Huntingtin-interacting protein C</fullName>
    </alternativeName>
</protein>
<comment type="function">
    <text evidence="1">May be involved in pre-mRNA splicing.</text>
</comment>
<comment type="subunit">
    <text evidence="1">Interacts with the N-terminus of HD.</text>
</comment>
<comment type="subcellular location">
    <subcellularLocation>
        <location evidence="1">Nucleus speckle</location>
    </subcellularLocation>
</comment>
<comment type="alternative products">
    <event type="alternative splicing"/>
    <isoform>
        <id>Q80W14-1</id>
        <name>1</name>
        <sequence type="displayed"/>
    </isoform>
    <isoform>
        <id>Q80W14-2</id>
        <name>2</name>
        <sequence type="described" ref="VSP_029122 VSP_029123"/>
    </isoform>
    <isoform>
        <id>Q80W14-3</id>
        <name>3</name>
        <sequence type="described" ref="VSP_029124 VSP_029125"/>
    </isoform>
</comment>
<comment type="similarity">
    <text evidence="9">Belongs to the PRPF40 family.</text>
</comment>
<sequence length="870" mass="99300">MMPPPFMPPPGLPPPFPPMGLPPMSQRPPAIPPMPPGILPPMLPPMGAPPPLTQIPGMVPPMMPGMLMPAVPVTAATAPGADTASSAVAGTGPPRALWSEHVAPDGRIYYYNADDKQSVWEKPSVLKSKAELLLSQCPWKEYKSDTGKPYYYNNQSQESRWTRPKDLDDLEALVKQESAGKQQTQQLQTLQPQPPQPQPDPPPIPPGPIPVPMALLEPEPGRSEDCDVLEAAQPLEQGFLQREEGPSSSTGQHRQPQEEEEAKPEPERSGLSWSNREKAKQAFKELLRDKAVPSNASWEQAMKMVVTDPRYSALPKLSEKKQAFNAYKAQREKEEKEEARLRAKEAKQTLQHFLEQHERMTSTTRYRRAEQTFGDLEVWAVVPERERKEVYDDVLFFLAKKEKEQAKQLRRRNIQALKSILDGMSSVNFQTTWSQAQQYLMDNPSFAQDQQLQNMDKEDALICFEEHIRALEREEEEERERARLRERRQQRKNREAFQSFLDELHETGQLHSMSTWMELYPAVSTDVRFANMLGQPGSTPLDLFKFYVEELKARFHDEKKIIKDILKDRGFCVEVNTAFEDFAHVISFDKRAAALDAGNIKLTFNSLLEKAEARETEREKEEARRMRRREAAFRSMLRQAVPALELGTAWEEVRERFVCDSAFEQITLESERIRLFREFLQVLEQTECQHLHTKGRKHGRKGKKHHRKRSHSPSGSESDEEELPPPSLRPPKRRRRNPSESGSEPSSSLDSVESGGAALGGPGSPSSHLLLGSDHGLRKTKKPKKKTKKRRHKSTSPDSETDPEDKAGKESEDREQEQDREPRQAELPNRSPGFGIKKEKTGWDTSESELSEGELERRRRTLLQQLDDHQ</sequence>
<keyword id="KW-0007">Acetylation</keyword>
<keyword id="KW-0025">Alternative splicing</keyword>
<keyword id="KW-0175">Coiled coil</keyword>
<keyword id="KW-1017">Isopeptide bond</keyword>
<keyword id="KW-0507">mRNA processing</keyword>
<keyword id="KW-0508">mRNA splicing</keyword>
<keyword id="KW-0539">Nucleus</keyword>
<keyword id="KW-0597">Phosphoprotein</keyword>
<keyword id="KW-1185">Reference proteome</keyword>
<keyword id="KW-0677">Repeat</keyword>
<keyword id="KW-0832">Ubl conjugation</keyword>
<proteinExistence type="evidence at protein level"/>
<accession>Q80W14</accession>
<accession>Q5XKB4</accession>
<accession>Q9CS39</accession>
<accession>Q9WVC9</accession>
<reference key="1">
    <citation type="submission" date="1999-03" db="EMBL/GenBank/DDBJ databases">
        <title>FBP11, a mammalian ortholog of the essential yeast splicing factor PRP40.</title>
        <authorList>
            <person name="Bedford M.T."/>
            <person name="Das R."/>
            <person name="Reed R."/>
            <person name="Leder P."/>
        </authorList>
    </citation>
    <scope>NUCLEOTIDE SEQUENCE [MRNA] (ISOFORM 3)</scope>
</reference>
<reference key="2">
    <citation type="journal article" date="2005" name="Science">
        <title>The transcriptional landscape of the mammalian genome.</title>
        <authorList>
            <person name="Carninci P."/>
            <person name="Kasukawa T."/>
            <person name="Katayama S."/>
            <person name="Gough J."/>
            <person name="Frith M.C."/>
            <person name="Maeda N."/>
            <person name="Oyama R."/>
            <person name="Ravasi T."/>
            <person name="Lenhard B."/>
            <person name="Wells C."/>
            <person name="Kodzius R."/>
            <person name="Shimokawa K."/>
            <person name="Bajic V.B."/>
            <person name="Brenner S.E."/>
            <person name="Batalov S."/>
            <person name="Forrest A.R."/>
            <person name="Zavolan M."/>
            <person name="Davis M.J."/>
            <person name="Wilming L.G."/>
            <person name="Aidinis V."/>
            <person name="Allen J.E."/>
            <person name="Ambesi-Impiombato A."/>
            <person name="Apweiler R."/>
            <person name="Aturaliya R.N."/>
            <person name="Bailey T.L."/>
            <person name="Bansal M."/>
            <person name="Baxter L."/>
            <person name="Beisel K.W."/>
            <person name="Bersano T."/>
            <person name="Bono H."/>
            <person name="Chalk A.M."/>
            <person name="Chiu K.P."/>
            <person name="Choudhary V."/>
            <person name="Christoffels A."/>
            <person name="Clutterbuck D.R."/>
            <person name="Crowe M.L."/>
            <person name="Dalla E."/>
            <person name="Dalrymple B.P."/>
            <person name="de Bono B."/>
            <person name="Della Gatta G."/>
            <person name="di Bernardo D."/>
            <person name="Down T."/>
            <person name="Engstrom P."/>
            <person name="Fagiolini M."/>
            <person name="Faulkner G."/>
            <person name="Fletcher C.F."/>
            <person name="Fukushima T."/>
            <person name="Furuno M."/>
            <person name="Futaki S."/>
            <person name="Gariboldi M."/>
            <person name="Georgii-Hemming P."/>
            <person name="Gingeras T.R."/>
            <person name="Gojobori T."/>
            <person name="Green R.E."/>
            <person name="Gustincich S."/>
            <person name="Harbers M."/>
            <person name="Hayashi Y."/>
            <person name="Hensch T.K."/>
            <person name="Hirokawa N."/>
            <person name="Hill D."/>
            <person name="Huminiecki L."/>
            <person name="Iacono M."/>
            <person name="Ikeo K."/>
            <person name="Iwama A."/>
            <person name="Ishikawa T."/>
            <person name="Jakt M."/>
            <person name="Kanapin A."/>
            <person name="Katoh M."/>
            <person name="Kawasawa Y."/>
            <person name="Kelso J."/>
            <person name="Kitamura H."/>
            <person name="Kitano H."/>
            <person name="Kollias G."/>
            <person name="Krishnan S.P."/>
            <person name="Kruger A."/>
            <person name="Kummerfeld S.K."/>
            <person name="Kurochkin I.V."/>
            <person name="Lareau L.F."/>
            <person name="Lazarevic D."/>
            <person name="Lipovich L."/>
            <person name="Liu J."/>
            <person name="Liuni S."/>
            <person name="McWilliam S."/>
            <person name="Madan Babu M."/>
            <person name="Madera M."/>
            <person name="Marchionni L."/>
            <person name="Matsuda H."/>
            <person name="Matsuzawa S."/>
            <person name="Miki H."/>
            <person name="Mignone F."/>
            <person name="Miyake S."/>
            <person name="Morris K."/>
            <person name="Mottagui-Tabar S."/>
            <person name="Mulder N."/>
            <person name="Nakano N."/>
            <person name="Nakauchi H."/>
            <person name="Ng P."/>
            <person name="Nilsson R."/>
            <person name="Nishiguchi S."/>
            <person name="Nishikawa S."/>
            <person name="Nori F."/>
            <person name="Ohara O."/>
            <person name="Okazaki Y."/>
            <person name="Orlando V."/>
            <person name="Pang K.C."/>
            <person name="Pavan W.J."/>
            <person name="Pavesi G."/>
            <person name="Pesole G."/>
            <person name="Petrovsky N."/>
            <person name="Piazza S."/>
            <person name="Reed J."/>
            <person name="Reid J.F."/>
            <person name="Ring B.Z."/>
            <person name="Ringwald M."/>
            <person name="Rost B."/>
            <person name="Ruan Y."/>
            <person name="Salzberg S.L."/>
            <person name="Sandelin A."/>
            <person name="Schneider C."/>
            <person name="Schoenbach C."/>
            <person name="Sekiguchi K."/>
            <person name="Semple C.A."/>
            <person name="Seno S."/>
            <person name="Sessa L."/>
            <person name="Sheng Y."/>
            <person name="Shibata Y."/>
            <person name="Shimada H."/>
            <person name="Shimada K."/>
            <person name="Silva D."/>
            <person name="Sinclair B."/>
            <person name="Sperling S."/>
            <person name="Stupka E."/>
            <person name="Sugiura K."/>
            <person name="Sultana R."/>
            <person name="Takenaka Y."/>
            <person name="Taki K."/>
            <person name="Tammoja K."/>
            <person name="Tan S.L."/>
            <person name="Tang S."/>
            <person name="Taylor M.S."/>
            <person name="Tegner J."/>
            <person name="Teichmann S.A."/>
            <person name="Ueda H.R."/>
            <person name="van Nimwegen E."/>
            <person name="Verardo R."/>
            <person name="Wei C.L."/>
            <person name="Yagi K."/>
            <person name="Yamanishi H."/>
            <person name="Zabarovsky E."/>
            <person name="Zhu S."/>
            <person name="Zimmer A."/>
            <person name="Hide W."/>
            <person name="Bult C."/>
            <person name="Grimmond S.M."/>
            <person name="Teasdale R.D."/>
            <person name="Liu E.T."/>
            <person name="Brusic V."/>
            <person name="Quackenbush J."/>
            <person name="Wahlestedt C."/>
            <person name="Mattick J.S."/>
            <person name="Hume D.A."/>
            <person name="Kai C."/>
            <person name="Sasaki D."/>
            <person name="Tomaru Y."/>
            <person name="Fukuda S."/>
            <person name="Kanamori-Katayama M."/>
            <person name="Suzuki M."/>
            <person name="Aoki J."/>
            <person name="Arakawa T."/>
            <person name="Iida J."/>
            <person name="Imamura K."/>
            <person name="Itoh M."/>
            <person name="Kato T."/>
            <person name="Kawaji H."/>
            <person name="Kawagashira N."/>
            <person name="Kawashima T."/>
            <person name="Kojima M."/>
            <person name="Kondo S."/>
            <person name="Konno H."/>
            <person name="Nakano K."/>
            <person name="Ninomiya N."/>
            <person name="Nishio T."/>
            <person name="Okada M."/>
            <person name="Plessy C."/>
            <person name="Shibata K."/>
            <person name="Shiraki T."/>
            <person name="Suzuki S."/>
            <person name="Tagami M."/>
            <person name="Waki K."/>
            <person name="Watahiki A."/>
            <person name="Okamura-Oho Y."/>
            <person name="Suzuki H."/>
            <person name="Kawai J."/>
            <person name="Hayashizaki Y."/>
        </authorList>
    </citation>
    <scope>NUCLEOTIDE SEQUENCE [LARGE SCALE MRNA] (ISOFORM 2)</scope>
    <scope>NUCLEOTIDE SEQUENCE [LARGE SCALE MRNA] OF 777-870 (ISOFORM 1/3)</scope>
    <source>
        <strain>C57BL/6J</strain>
        <tissue>Corpora quadrigemina</tissue>
        <tissue>Embryo</tissue>
    </source>
</reference>
<reference key="3">
    <citation type="journal article" date="2004" name="Genome Res.">
        <title>The status, quality, and expansion of the NIH full-length cDNA project: the Mammalian Gene Collection (MGC).</title>
        <authorList>
            <consortium name="The MGC Project Team"/>
        </authorList>
    </citation>
    <scope>NUCLEOTIDE SEQUENCE [LARGE SCALE MRNA] (ISOFORMS 1 AND 2)</scope>
    <source>
        <strain>C57BL/6J</strain>
        <tissue>Brain</tissue>
        <tissue>Embryo</tissue>
    </source>
</reference>
<reference key="4">
    <citation type="journal article" date="2010" name="Cell">
        <title>A tissue-specific atlas of mouse protein phosphorylation and expression.</title>
        <authorList>
            <person name="Huttlin E.L."/>
            <person name="Jedrychowski M.P."/>
            <person name="Elias J.E."/>
            <person name="Goswami T."/>
            <person name="Rad R."/>
            <person name="Beausoleil S.A."/>
            <person name="Villen J."/>
            <person name="Haas W."/>
            <person name="Sowa M.E."/>
            <person name="Gygi S.P."/>
        </authorList>
    </citation>
    <scope>PHOSPHORYLATION [LARGE SCALE ANALYSIS] AT SER-851</scope>
    <scope>IDENTIFICATION BY MASS SPECTROMETRY [LARGE SCALE ANALYSIS]</scope>
    <source>
        <tissue>Testis</tissue>
    </source>
</reference>
<dbReference type="EMBL" id="AF135440">
    <property type="protein sequence ID" value="AAD39464.1"/>
    <property type="molecule type" value="mRNA"/>
</dbReference>
<dbReference type="EMBL" id="AK019183">
    <property type="protein sequence ID" value="BAB31591.1"/>
    <property type="molecule type" value="mRNA"/>
</dbReference>
<dbReference type="EMBL" id="AK140075">
    <property type="protein sequence ID" value="BAE24230.1"/>
    <property type="molecule type" value="mRNA"/>
</dbReference>
<dbReference type="EMBL" id="BC051961">
    <property type="protein sequence ID" value="AAH51961.1"/>
    <property type="molecule type" value="mRNA"/>
</dbReference>
<dbReference type="EMBL" id="BC082994">
    <property type="protein sequence ID" value="AAH82994.1"/>
    <property type="molecule type" value="mRNA"/>
</dbReference>
<dbReference type="CCDS" id="CCDS27818.1">
    <molecule id="Q80W14-3"/>
</dbReference>
<dbReference type="CCDS" id="CCDS88839.1">
    <molecule id="Q80W14-1"/>
</dbReference>
<dbReference type="RefSeq" id="NP_001335185.1">
    <property type="nucleotide sequence ID" value="NM_001348256.1"/>
</dbReference>
<dbReference type="RefSeq" id="NP_061256.1">
    <property type="nucleotide sequence ID" value="NM_018786.3"/>
</dbReference>
<dbReference type="SMR" id="Q80W14"/>
<dbReference type="FunCoup" id="Q80W14">
    <property type="interactions" value="1234"/>
</dbReference>
<dbReference type="STRING" id="10090.ENSMUSP00000115869"/>
<dbReference type="iPTMnet" id="Q80W14"/>
<dbReference type="PhosphoSitePlus" id="Q80W14"/>
<dbReference type="jPOST" id="Q80W14"/>
<dbReference type="PaxDb" id="10090-ENSMUSP00000115869"/>
<dbReference type="ProteomicsDB" id="289824">
    <molecule id="Q80W14-1"/>
</dbReference>
<dbReference type="ProteomicsDB" id="289825">
    <molecule id="Q80W14-2"/>
</dbReference>
<dbReference type="ProteomicsDB" id="289826">
    <molecule id="Q80W14-3"/>
</dbReference>
<dbReference type="DNASU" id="54614"/>
<dbReference type="GeneID" id="54614"/>
<dbReference type="KEGG" id="mmu:54614"/>
<dbReference type="UCSC" id="uc007xph.1">
    <molecule id="Q80W14-3"/>
    <property type="organism name" value="mouse"/>
</dbReference>
<dbReference type="AGR" id="MGI:1925583"/>
<dbReference type="CTD" id="25766"/>
<dbReference type="MGI" id="MGI:1925583">
    <property type="gene designation" value="Prpf40b"/>
</dbReference>
<dbReference type="eggNOG" id="KOG0152">
    <property type="taxonomic scope" value="Eukaryota"/>
</dbReference>
<dbReference type="InParanoid" id="Q80W14"/>
<dbReference type="OrthoDB" id="187617at2759"/>
<dbReference type="TreeFam" id="TF318732"/>
<dbReference type="BioGRID-ORCS" id="54614">
    <property type="hits" value="3 hits in 78 CRISPR screens"/>
</dbReference>
<dbReference type="ChiTaRS" id="Prpf40b">
    <property type="organism name" value="mouse"/>
</dbReference>
<dbReference type="PRO" id="PR:Q80W14"/>
<dbReference type="Proteomes" id="UP000000589">
    <property type="component" value="Unplaced"/>
</dbReference>
<dbReference type="RNAct" id="Q80W14">
    <property type="molecule type" value="protein"/>
</dbReference>
<dbReference type="GO" id="GO:0016607">
    <property type="term" value="C:nuclear speck"/>
    <property type="evidence" value="ECO:0007669"/>
    <property type="project" value="UniProtKB-SubCell"/>
</dbReference>
<dbReference type="GO" id="GO:0045292">
    <property type="term" value="P:mRNA cis splicing, via spliceosome"/>
    <property type="evidence" value="ECO:0007669"/>
    <property type="project" value="InterPro"/>
</dbReference>
<dbReference type="CDD" id="cd00201">
    <property type="entry name" value="WW"/>
    <property type="match status" value="2"/>
</dbReference>
<dbReference type="FunFam" id="1.10.10.440:FF:000003">
    <property type="entry name" value="Pre-mRNA processing factor 40 homolog A"/>
    <property type="match status" value="1"/>
</dbReference>
<dbReference type="FunFam" id="1.10.10.440:FF:000002">
    <property type="entry name" value="pre-mRNA-processing factor 40 homolog A isoform X1"/>
    <property type="match status" value="1"/>
</dbReference>
<dbReference type="FunFam" id="1.10.10.440:FF:000009">
    <property type="entry name" value="pre-mRNA-processing factor 40 homolog A isoform X1"/>
    <property type="match status" value="1"/>
</dbReference>
<dbReference type="FunFam" id="1.10.10.440:FF:000016">
    <property type="entry name" value="pre-mRNA-processing factor 40 homolog B isoform X1"/>
    <property type="match status" value="1"/>
</dbReference>
<dbReference type="FunFam" id="2.20.70.10:FF:000050">
    <property type="entry name" value="pre-mRNA-processing factor 40 homolog B isoform X1"/>
    <property type="match status" value="1"/>
</dbReference>
<dbReference type="FunFam" id="2.20.70.10:FF:000052">
    <property type="entry name" value="pre-mRNA-processing factor 40 homolog B isoform X1"/>
    <property type="match status" value="1"/>
</dbReference>
<dbReference type="FunFam" id="1.10.10.440:FF:000015">
    <property type="entry name" value="pre-mRNA-processing factor 40 homolog B isoform X2"/>
    <property type="match status" value="1"/>
</dbReference>
<dbReference type="Gene3D" id="2.20.70.10">
    <property type="match status" value="2"/>
</dbReference>
<dbReference type="Gene3D" id="1.10.10.440">
    <property type="entry name" value="FF domain"/>
    <property type="match status" value="5"/>
</dbReference>
<dbReference type="InterPro" id="IPR002713">
    <property type="entry name" value="FF_domain"/>
</dbReference>
<dbReference type="InterPro" id="IPR036517">
    <property type="entry name" value="FF_domain_sf"/>
</dbReference>
<dbReference type="InterPro" id="IPR039726">
    <property type="entry name" value="Prp40-like"/>
</dbReference>
<dbReference type="InterPro" id="IPR001202">
    <property type="entry name" value="WW_dom"/>
</dbReference>
<dbReference type="InterPro" id="IPR036020">
    <property type="entry name" value="WW_dom_sf"/>
</dbReference>
<dbReference type="PANTHER" id="PTHR11864:SF1">
    <property type="entry name" value="PRE-MRNA-PROCESSING FACTOR 40 HOMOLOG B"/>
    <property type="match status" value="1"/>
</dbReference>
<dbReference type="PANTHER" id="PTHR11864">
    <property type="entry name" value="PRE-MRNA-PROCESSING PROTEIN PRP40"/>
    <property type="match status" value="1"/>
</dbReference>
<dbReference type="Pfam" id="PF01846">
    <property type="entry name" value="FF"/>
    <property type="match status" value="3"/>
</dbReference>
<dbReference type="Pfam" id="PF25432">
    <property type="entry name" value="FF_PRPF40A"/>
    <property type="match status" value="1"/>
</dbReference>
<dbReference type="Pfam" id="PF00397">
    <property type="entry name" value="WW"/>
    <property type="match status" value="2"/>
</dbReference>
<dbReference type="SMART" id="SM00441">
    <property type="entry name" value="FF"/>
    <property type="match status" value="4"/>
</dbReference>
<dbReference type="SMART" id="SM00456">
    <property type="entry name" value="WW"/>
    <property type="match status" value="2"/>
</dbReference>
<dbReference type="SUPFAM" id="SSF81698">
    <property type="entry name" value="FF domain"/>
    <property type="match status" value="5"/>
</dbReference>
<dbReference type="SUPFAM" id="SSF51045">
    <property type="entry name" value="WW domain"/>
    <property type="match status" value="2"/>
</dbReference>
<dbReference type="PROSITE" id="PS51676">
    <property type="entry name" value="FF"/>
    <property type="match status" value="6"/>
</dbReference>
<dbReference type="PROSITE" id="PS01159">
    <property type="entry name" value="WW_DOMAIN_1"/>
    <property type="match status" value="1"/>
</dbReference>
<dbReference type="PROSITE" id="PS50020">
    <property type="entry name" value="WW_DOMAIN_2"/>
    <property type="match status" value="2"/>
</dbReference>
<name>PR40B_MOUSE</name>
<evidence type="ECO:0000250" key="1"/>
<evidence type="ECO:0000250" key="2">
    <source>
        <dbReference type="UniProtKB" id="Q6NWY9"/>
    </source>
</evidence>
<evidence type="ECO:0000255" key="3"/>
<evidence type="ECO:0000255" key="4">
    <source>
        <dbReference type="PROSITE-ProRule" id="PRU00224"/>
    </source>
</evidence>
<evidence type="ECO:0000256" key="5">
    <source>
        <dbReference type="SAM" id="MobiDB-lite"/>
    </source>
</evidence>
<evidence type="ECO:0000303" key="6">
    <source>
    </source>
</evidence>
<evidence type="ECO:0000303" key="7">
    <source>
    </source>
</evidence>
<evidence type="ECO:0000303" key="8">
    <source ref="1"/>
</evidence>
<evidence type="ECO:0000305" key="9"/>
<evidence type="ECO:0007744" key="10">
    <source>
    </source>
</evidence>
<organism>
    <name type="scientific">Mus musculus</name>
    <name type="common">Mouse</name>
    <dbReference type="NCBI Taxonomy" id="10090"/>
    <lineage>
        <taxon>Eukaryota</taxon>
        <taxon>Metazoa</taxon>
        <taxon>Chordata</taxon>
        <taxon>Craniata</taxon>
        <taxon>Vertebrata</taxon>
        <taxon>Euteleostomi</taxon>
        <taxon>Mammalia</taxon>
        <taxon>Eutheria</taxon>
        <taxon>Euarchontoglires</taxon>
        <taxon>Glires</taxon>
        <taxon>Rodentia</taxon>
        <taxon>Myomorpha</taxon>
        <taxon>Muroidea</taxon>
        <taxon>Muridae</taxon>
        <taxon>Murinae</taxon>
        <taxon>Mus</taxon>
        <taxon>Mus</taxon>
    </lineage>
</organism>